<feature type="chain" id="PRO_0000066031" description="Phage-like element PBSX protein XkdR">
    <location>
        <begin position="1"/>
        <end position="88"/>
    </location>
</feature>
<reference key="1">
    <citation type="submission" date="1996-03" db="EMBL/GenBank/DDBJ databases">
        <authorList>
            <person name="Krogh S."/>
            <person name="O'Reilly M."/>
            <person name="Nolan N."/>
            <person name="Devine K.M."/>
        </authorList>
    </citation>
    <scope>NUCLEOTIDE SEQUENCE [GENOMIC DNA]</scope>
    <source>
        <strain>168</strain>
    </source>
</reference>
<reference key="2">
    <citation type="journal article" date="1997" name="Nature">
        <title>The complete genome sequence of the Gram-positive bacterium Bacillus subtilis.</title>
        <authorList>
            <person name="Kunst F."/>
            <person name="Ogasawara N."/>
            <person name="Moszer I."/>
            <person name="Albertini A.M."/>
            <person name="Alloni G."/>
            <person name="Azevedo V."/>
            <person name="Bertero M.G."/>
            <person name="Bessieres P."/>
            <person name="Bolotin A."/>
            <person name="Borchert S."/>
            <person name="Borriss R."/>
            <person name="Boursier L."/>
            <person name="Brans A."/>
            <person name="Braun M."/>
            <person name="Brignell S.C."/>
            <person name="Bron S."/>
            <person name="Brouillet S."/>
            <person name="Bruschi C.V."/>
            <person name="Caldwell B."/>
            <person name="Capuano V."/>
            <person name="Carter N.M."/>
            <person name="Choi S.-K."/>
            <person name="Codani J.-J."/>
            <person name="Connerton I.F."/>
            <person name="Cummings N.J."/>
            <person name="Daniel R.A."/>
            <person name="Denizot F."/>
            <person name="Devine K.M."/>
            <person name="Duesterhoeft A."/>
            <person name="Ehrlich S.D."/>
            <person name="Emmerson P.T."/>
            <person name="Entian K.-D."/>
            <person name="Errington J."/>
            <person name="Fabret C."/>
            <person name="Ferrari E."/>
            <person name="Foulger D."/>
            <person name="Fritz C."/>
            <person name="Fujita M."/>
            <person name="Fujita Y."/>
            <person name="Fuma S."/>
            <person name="Galizzi A."/>
            <person name="Galleron N."/>
            <person name="Ghim S.-Y."/>
            <person name="Glaser P."/>
            <person name="Goffeau A."/>
            <person name="Golightly E.J."/>
            <person name="Grandi G."/>
            <person name="Guiseppi G."/>
            <person name="Guy B.J."/>
            <person name="Haga K."/>
            <person name="Haiech J."/>
            <person name="Harwood C.R."/>
            <person name="Henaut A."/>
            <person name="Hilbert H."/>
            <person name="Holsappel S."/>
            <person name="Hosono S."/>
            <person name="Hullo M.-F."/>
            <person name="Itaya M."/>
            <person name="Jones L.-M."/>
            <person name="Joris B."/>
            <person name="Karamata D."/>
            <person name="Kasahara Y."/>
            <person name="Klaerr-Blanchard M."/>
            <person name="Klein C."/>
            <person name="Kobayashi Y."/>
            <person name="Koetter P."/>
            <person name="Koningstein G."/>
            <person name="Krogh S."/>
            <person name="Kumano M."/>
            <person name="Kurita K."/>
            <person name="Lapidus A."/>
            <person name="Lardinois S."/>
            <person name="Lauber J."/>
            <person name="Lazarevic V."/>
            <person name="Lee S.-M."/>
            <person name="Levine A."/>
            <person name="Liu H."/>
            <person name="Masuda S."/>
            <person name="Mauel C."/>
            <person name="Medigue C."/>
            <person name="Medina N."/>
            <person name="Mellado R.P."/>
            <person name="Mizuno M."/>
            <person name="Moestl D."/>
            <person name="Nakai S."/>
            <person name="Noback M."/>
            <person name="Noone D."/>
            <person name="O'Reilly M."/>
            <person name="Ogawa K."/>
            <person name="Ogiwara A."/>
            <person name="Oudega B."/>
            <person name="Park S.-H."/>
            <person name="Parro V."/>
            <person name="Pohl T.M."/>
            <person name="Portetelle D."/>
            <person name="Porwollik S."/>
            <person name="Prescott A.M."/>
            <person name="Presecan E."/>
            <person name="Pujic P."/>
            <person name="Purnelle B."/>
            <person name="Rapoport G."/>
            <person name="Rey M."/>
            <person name="Reynolds S."/>
            <person name="Rieger M."/>
            <person name="Rivolta C."/>
            <person name="Rocha E."/>
            <person name="Roche B."/>
            <person name="Rose M."/>
            <person name="Sadaie Y."/>
            <person name="Sato T."/>
            <person name="Scanlan E."/>
            <person name="Schleich S."/>
            <person name="Schroeter R."/>
            <person name="Scoffone F."/>
            <person name="Sekiguchi J."/>
            <person name="Sekowska A."/>
            <person name="Seror S.J."/>
            <person name="Serror P."/>
            <person name="Shin B.-S."/>
            <person name="Soldo B."/>
            <person name="Sorokin A."/>
            <person name="Tacconi E."/>
            <person name="Takagi T."/>
            <person name="Takahashi H."/>
            <person name="Takemaru K."/>
            <person name="Takeuchi M."/>
            <person name="Tamakoshi A."/>
            <person name="Tanaka T."/>
            <person name="Terpstra P."/>
            <person name="Tognoni A."/>
            <person name="Tosato V."/>
            <person name="Uchiyama S."/>
            <person name="Vandenbol M."/>
            <person name="Vannier F."/>
            <person name="Vassarotti A."/>
            <person name="Viari A."/>
            <person name="Wambutt R."/>
            <person name="Wedler E."/>
            <person name="Wedler H."/>
            <person name="Weitzenegger T."/>
            <person name="Winters P."/>
            <person name="Wipat A."/>
            <person name="Yamamoto H."/>
            <person name="Yamane K."/>
            <person name="Yasumoto K."/>
            <person name="Yata K."/>
            <person name="Yoshida K."/>
            <person name="Yoshikawa H.-F."/>
            <person name="Zumstein E."/>
            <person name="Yoshikawa H."/>
            <person name="Danchin A."/>
        </authorList>
    </citation>
    <scope>NUCLEOTIDE SEQUENCE [LARGE SCALE GENOMIC DNA]</scope>
    <source>
        <strain>168</strain>
    </source>
</reference>
<organism>
    <name type="scientific">Bacillus subtilis (strain 168)</name>
    <dbReference type="NCBI Taxonomy" id="224308"/>
    <lineage>
        <taxon>Bacteria</taxon>
        <taxon>Bacillati</taxon>
        <taxon>Bacillota</taxon>
        <taxon>Bacilli</taxon>
        <taxon>Bacillales</taxon>
        <taxon>Bacillaceae</taxon>
        <taxon>Bacillus</taxon>
    </lineage>
</organism>
<gene>
    <name type="primary">xkdR</name>
    <name type="ordered locus">BSU12710</name>
</gene>
<name>XKDR_BACSU</name>
<accession>P54337</accession>
<proteinExistence type="predicted"/>
<sequence>MRLSEAIKHLAVGAVDAESPVELLPAEVVSVSPVEIKLKENSKLIIPEDAIIIPKRMQSGGDDALEPGDRLMTAALTGGQSFFILDKV</sequence>
<dbReference type="EMBL" id="Z70177">
    <property type="protein sequence ID" value="CAA94039.1"/>
    <property type="molecule type" value="Genomic_DNA"/>
</dbReference>
<dbReference type="EMBL" id="AL009126">
    <property type="protein sequence ID" value="CAB13128.1"/>
    <property type="molecule type" value="Genomic_DNA"/>
</dbReference>
<dbReference type="PIR" id="A69733">
    <property type="entry name" value="A69733"/>
</dbReference>
<dbReference type="RefSeq" id="NP_389153.1">
    <property type="nucleotide sequence ID" value="NC_000964.3"/>
</dbReference>
<dbReference type="RefSeq" id="WP_003244812.1">
    <property type="nucleotide sequence ID" value="NZ_OZ025638.1"/>
</dbReference>
<dbReference type="SMR" id="P54337"/>
<dbReference type="FunCoup" id="P54337">
    <property type="interactions" value="76"/>
</dbReference>
<dbReference type="STRING" id="224308.BSU12710"/>
<dbReference type="PaxDb" id="224308-BSU12710"/>
<dbReference type="EnsemblBacteria" id="CAB13128">
    <property type="protein sequence ID" value="CAB13128"/>
    <property type="gene ID" value="BSU_12710"/>
</dbReference>
<dbReference type="GeneID" id="939427"/>
<dbReference type="KEGG" id="bsu:BSU12710"/>
<dbReference type="PATRIC" id="fig|224308.179.peg.1378"/>
<dbReference type="eggNOG" id="ENOG5030CVT">
    <property type="taxonomic scope" value="Bacteria"/>
</dbReference>
<dbReference type="InParanoid" id="P54337"/>
<dbReference type="OrthoDB" id="95576at2"/>
<dbReference type="BioCyc" id="BSUB:BSU12710-MONOMER"/>
<dbReference type="Proteomes" id="UP000001570">
    <property type="component" value="Chromosome"/>
</dbReference>
<dbReference type="InterPro" id="IPR022555">
    <property type="entry name" value="DUF2577"/>
</dbReference>
<dbReference type="Pfam" id="PF10844">
    <property type="entry name" value="DUF2577"/>
    <property type="match status" value="1"/>
</dbReference>
<evidence type="ECO:0000305" key="1"/>
<comment type="similarity">
    <text evidence="1">To B.subtilis YqbR.</text>
</comment>
<protein>
    <recommendedName>
        <fullName>Phage-like element PBSX protein XkdR</fullName>
    </recommendedName>
</protein>
<keyword id="KW-1185">Reference proteome</keyword>